<name>RT12_MAGSO</name>
<sequence>MPTLNQLIRHGREEKRRTDRTRASDQCPQKQGVRPRVPTRTPKKPNSAPRKIAKVRLSNRHDIFAHIPGEGHNSQEHPMVLIRGGRVKDSPGVKSHRIRGVKDLLGIPNRRRGRSKYGAERPKSI</sequence>
<proteinExistence type="evidence at transcript level"/>
<feature type="chain" id="PRO_0000146439" description="Small ribosomal subunit protein uS12m">
    <location>
        <begin position="1"/>
        <end position="125"/>
    </location>
</feature>
<feature type="region of interest" description="Disordered" evidence="1">
    <location>
        <begin position="1"/>
        <end position="50"/>
    </location>
</feature>
<feature type="region of interest" description="Disordered" evidence="1">
    <location>
        <begin position="106"/>
        <end position="125"/>
    </location>
</feature>
<feature type="compositionally biased region" description="Basic and acidic residues" evidence="1">
    <location>
        <begin position="10"/>
        <end position="23"/>
    </location>
</feature>
<evidence type="ECO:0000256" key="1">
    <source>
        <dbReference type="SAM" id="MobiDB-lite"/>
    </source>
</evidence>
<evidence type="ECO:0000269" key="2">
    <source>
    </source>
</evidence>
<evidence type="ECO:0000305" key="3"/>
<gene>
    <name type="primary">RPS12</name>
</gene>
<protein>
    <recommendedName>
        <fullName evidence="3">Small ribosomal subunit protein uS12m</fullName>
    </recommendedName>
    <alternativeName>
        <fullName>Ribosomal protein S12, mitochondrial</fullName>
    </alternativeName>
</protein>
<accession>P60097</accession>
<accession>Q96038</accession>
<accession>Q96100</accession>
<geneLocation type="mitochondrion"/>
<organism>
    <name type="scientific">Magnolia soulangeana</name>
    <name type="common">Saucer magnolia</name>
    <name type="synonym">Magnolia denudata x Magnolia liliiflora</name>
    <dbReference type="NCBI Taxonomy" id="3407"/>
    <lineage>
        <taxon>Eukaryota</taxon>
        <taxon>Viridiplantae</taxon>
        <taxon>Streptophyta</taxon>
        <taxon>Embryophyta</taxon>
        <taxon>Tracheophyta</taxon>
        <taxon>Spermatophyta</taxon>
        <taxon>Magnoliopsida</taxon>
        <taxon>Magnoliidae</taxon>
        <taxon>Magnoliales</taxon>
        <taxon>Magnoliaceae</taxon>
        <taxon>Magnolia</taxon>
    </lineage>
</organism>
<dbReference type="EMBL" id="Z49797">
    <property type="protein sequence ID" value="CAA89891.1"/>
    <property type="molecule type" value="Genomic_DNA"/>
</dbReference>
<dbReference type="EMBL" id="Z49796">
    <property type="protein sequence ID" value="CAA89889.1"/>
    <property type="status" value="ALT_SEQ"/>
    <property type="molecule type" value="mRNA"/>
</dbReference>
<dbReference type="PIR" id="S71085">
    <property type="entry name" value="S71085"/>
</dbReference>
<dbReference type="SMR" id="P60097"/>
<dbReference type="GO" id="GO:0005739">
    <property type="term" value="C:mitochondrion"/>
    <property type="evidence" value="ECO:0007669"/>
    <property type="project" value="UniProtKB-SubCell"/>
</dbReference>
<dbReference type="GO" id="GO:0015935">
    <property type="term" value="C:small ribosomal subunit"/>
    <property type="evidence" value="ECO:0007669"/>
    <property type="project" value="InterPro"/>
</dbReference>
<dbReference type="GO" id="GO:0003735">
    <property type="term" value="F:structural constituent of ribosome"/>
    <property type="evidence" value="ECO:0007669"/>
    <property type="project" value="InterPro"/>
</dbReference>
<dbReference type="GO" id="GO:0006412">
    <property type="term" value="P:translation"/>
    <property type="evidence" value="ECO:0007669"/>
    <property type="project" value="InterPro"/>
</dbReference>
<dbReference type="CDD" id="cd03368">
    <property type="entry name" value="Ribosomal_S12"/>
    <property type="match status" value="1"/>
</dbReference>
<dbReference type="FunFam" id="2.40.50.140:FF:000099">
    <property type="entry name" value="Ribosomal protein S12, mitochondrial"/>
    <property type="match status" value="1"/>
</dbReference>
<dbReference type="Gene3D" id="2.40.50.140">
    <property type="entry name" value="Nucleic acid-binding proteins"/>
    <property type="match status" value="1"/>
</dbReference>
<dbReference type="InterPro" id="IPR012340">
    <property type="entry name" value="NA-bd_OB-fold"/>
</dbReference>
<dbReference type="InterPro" id="IPR006032">
    <property type="entry name" value="Ribosomal_uS12"/>
</dbReference>
<dbReference type="InterPro" id="IPR005679">
    <property type="entry name" value="Ribosomal_uS12_bac"/>
</dbReference>
<dbReference type="NCBIfam" id="TIGR00981">
    <property type="entry name" value="rpsL_bact"/>
    <property type="match status" value="1"/>
</dbReference>
<dbReference type="PANTHER" id="PTHR11652">
    <property type="entry name" value="30S RIBOSOMAL PROTEIN S12 FAMILY MEMBER"/>
    <property type="match status" value="1"/>
</dbReference>
<dbReference type="Pfam" id="PF00164">
    <property type="entry name" value="Ribosom_S12_S23"/>
    <property type="match status" value="1"/>
</dbReference>
<dbReference type="PIRSF" id="PIRSF002133">
    <property type="entry name" value="Ribosomal_S12/S23"/>
    <property type="match status" value="1"/>
</dbReference>
<dbReference type="PRINTS" id="PR01034">
    <property type="entry name" value="RIBOSOMALS12"/>
</dbReference>
<dbReference type="SUPFAM" id="SSF50249">
    <property type="entry name" value="Nucleic acid-binding proteins"/>
    <property type="match status" value="1"/>
</dbReference>
<dbReference type="PROSITE" id="PS00055">
    <property type="entry name" value="RIBOSOMAL_S12"/>
    <property type="match status" value="1"/>
</dbReference>
<keyword id="KW-0496">Mitochondrion</keyword>
<keyword id="KW-0687">Ribonucleoprotein</keyword>
<keyword id="KW-0689">Ribosomal protein</keyword>
<keyword id="KW-0691">RNA editing</keyword>
<comment type="function">
    <text>Protein S12 is involved in the translation initiation step.</text>
</comment>
<comment type="subcellular location">
    <subcellularLocation>
        <location>Mitochondrion</location>
    </subcellularLocation>
</comment>
<comment type="RNA editing">
    <location>
        <position position="24" evidence="2"/>
    </location>
    <location>
        <position position="34" evidence="2"/>
    </location>
    <location>
        <position position="35" evidence="2"/>
    </location>
    <location>
        <position position="38" evidence="2"/>
    </location>
    <location>
        <position position="49" evidence="2"/>
    </location>
    <location>
        <position position="66" evidence="2"/>
    </location>
    <location>
        <position position="74" evidence="2"/>
    </location>
    <location>
        <position position="78" evidence="2"/>
    </location>
    <location>
        <position position="90" evidence="2"/>
    </location>
    <location>
        <position position="95" evidence="2"/>
    </location>
    <location>
        <position position="97" evidence="2"/>
    </location>
</comment>
<comment type="similarity">
    <text evidence="3">Belongs to the universal ribosomal protein uS12 family.</text>
</comment>
<reference key="1">
    <citation type="journal article" date="1996" name="Mol. Gen. Genet.">
        <title>Conservation of the organization of the mitochondrial nad3 and rps12 genes in evolutionarily distant angiosperms.</title>
        <authorList>
            <person name="Perrotta G."/>
            <person name="Regina T.M.R."/>
            <person name="Ceci L.R."/>
            <person name="Quagliariello C.C."/>
        </authorList>
    </citation>
    <scope>NUCLEOTIDE SEQUENCE [GENOMIC DNA / MRNA]</scope>
    <scope>RNA EDITING</scope>
    <source>
        <tissue>Petal</tissue>
    </source>
</reference>